<comment type="function">
    <text evidence="1">Catalyzes the ferrous insertion into protoporphyrin IX.</text>
</comment>
<comment type="catalytic activity">
    <reaction evidence="1">
        <text>heme b + 2 H(+) = protoporphyrin IX + Fe(2+)</text>
        <dbReference type="Rhea" id="RHEA:22584"/>
        <dbReference type="ChEBI" id="CHEBI:15378"/>
        <dbReference type="ChEBI" id="CHEBI:29033"/>
        <dbReference type="ChEBI" id="CHEBI:57306"/>
        <dbReference type="ChEBI" id="CHEBI:60344"/>
        <dbReference type="EC" id="4.98.1.1"/>
    </reaction>
</comment>
<comment type="pathway">
    <text evidence="1">Porphyrin-containing compound metabolism; protoheme biosynthesis; protoheme from protoporphyrin-IX: step 1/1.</text>
</comment>
<comment type="subcellular location">
    <subcellularLocation>
        <location evidence="1">Cytoplasm</location>
    </subcellularLocation>
</comment>
<comment type="similarity">
    <text evidence="1">Belongs to the ferrochelatase family.</text>
</comment>
<reference key="1">
    <citation type="submission" date="2007-09" db="EMBL/GenBank/DDBJ databases">
        <title>Complete sequence of chromosome of Serratia proteamaculans 568.</title>
        <authorList>
            <consortium name="US DOE Joint Genome Institute"/>
            <person name="Copeland A."/>
            <person name="Lucas S."/>
            <person name="Lapidus A."/>
            <person name="Barry K."/>
            <person name="Glavina del Rio T."/>
            <person name="Dalin E."/>
            <person name="Tice H."/>
            <person name="Pitluck S."/>
            <person name="Chain P."/>
            <person name="Malfatti S."/>
            <person name="Shin M."/>
            <person name="Vergez L."/>
            <person name="Schmutz J."/>
            <person name="Larimer F."/>
            <person name="Land M."/>
            <person name="Hauser L."/>
            <person name="Kyrpides N."/>
            <person name="Kim E."/>
            <person name="Taghavi S."/>
            <person name="Newman L."/>
            <person name="Vangronsveld J."/>
            <person name="van der Lelie D."/>
            <person name="Richardson P."/>
        </authorList>
    </citation>
    <scope>NUCLEOTIDE SEQUENCE [LARGE SCALE GENOMIC DNA]</scope>
    <source>
        <strain>568</strain>
    </source>
</reference>
<keyword id="KW-0963">Cytoplasm</keyword>
<keyword id="KW-0350">Heme biosynthesis</keyword>
<keyword id="KW-0408">Iron</keyword>
<keyword id="KW-0456">Lyase</keyword>
<keyword id="KW-0479">Metal-binding</keyword>
<keyword id="KW-0627">Porphyrin biosynthesis</keyword>
<evidence type="ECO:0000255" key="1">
    <source>
        <dbReference type="HAMAP-Rule" id="MF_00323"/>
    </source>
</evidence>
<feature type="chain" id="PRO_1000059487" description="Ferrochelatase">
    <location>
        <begin position="1"/>
        <end position="320"/>
    </location>
</feature>
<feature type="binding site" evidence="1">
    <location>
        <position position="194"/>
    </location>
    <ligand>
        <name>Fe cation</name>
        <dbReference type="ChEBI" id="CHEBI:24875"/>
    </ligand>
</feature>
<feature type="binding site" evidence="1">
    <location>
        <position position="275"/>
    </location>
    <ligand>
        <name>Fe cation</name>
        <dbReference type="ChEBI" id="CHEBI:24875"/>
    </ligand>
</feature>
<dbReference type="EC" id="4.98.1.1" evidence="1"/>
<dbReference type="EMBL" id="CP000826">
    <property type="protein sequence ID" value="ABV40247.1"/>
    <property type="molecule type" value="Genomic_DNA"/>
</dbReference>
<dbReference type="SMR" id="A8GAV7"/>
<dbReference type="STRING" id="399741.Spro_1143"/>
<dbReference type="KEGG" id="spe:Spro_1143"/>
<dbReference type="eggNOG" id="COG0276">
    <property type="taxonomic scope" value="Bacteria"/>
</dbReference>
<dbReference type="HOGENOM" id="CLU_018884_0_0_6"/>
<dbReference type="OrthoDB" id="9809741at2"/>
<dbReference type="UniPathway" id="UPA00252">
    <property type="reaction ID" value="UER00325"/>
</dbReference>
<dbReference type="GO" id="GO:0005737">
    <property type="term" value="C:cytoplasm"/>
    <property type="evidence" value="ECO:0007669"/>
    <property type="project" value="UniProtKB-SubCell"/>
</dbReference>
<dbReference type="GO" id="GO:0004325">
    <property type="term" value="F:ferrochelatase activity"/>
    <property type="evidence" value="ECO:0007669"/>
    <property type="project" value="UniProtKB-UniRule"/>
</dbReference>
<dbReference type="GO" id="GO:0046872">
    <property type="term" value="F:metal ion binding"/>
    <property type="evidence" value="ECO:0007669"/>
    <property type="project" value="UniProtKB-KW"/>
</dbReference>
<dbReference type="GO" id="GO:0006783">
    <property type="term" value="P:heme biosynthetic process"/>
    <property type="evidence" value="ECO:0007669"/>
    <property type="project" value="UniProtKB-UniRule"/>
</dbReference>
<dbReference type="CDD" id="cd00419">
    <property type="entry name" value="Ferrochelatase_C"/>
    <property type="match status" value="1"/>
</dbReference>
<dbReference type="CDD" id="cd03411">
    <property type="entry name" value="Ferrochelatase_N"/>
    <property type="match status" value="1"/>
</dbReference>
<dbReference type="FunFam" id="3.40.50.1400:FF:000004">
    <property type="entry name" value="Ferrochelatase"/>
    <property type="match status" value="1"/>
</dbReference>
<dbReference type="Gene3D" id="3.40.50.1400">
    <property type="match status" value="2"/>
</dbReference>
<dbReference type="HAMAP" id="MF_00323">
    <property type="entry name" value="Ferrochelatase"/>
    <property type="match status" value="1"/>
</dbReference>
<dbReference type="InterPro" id="IPR001015">
    <property type="entry name" value="Ferrochelatase"/>
</dbReference>
<dbReference type="InterPro" id="IPR019772">
    <property type="entry name" value="Ferrochelatase_AS"/>
</dbReference>
<dbReference type="InterPro" id="IPR033644">
    <property type="entry name" value="Ferrochelatase_C"/>
</dbReference>
<dbReference type="InterPro" id="IPR033659">
    <property type="entry name" value="Ferrochelatase_N"/>
</dbReference>
<dbReference type="NCBIfam" id="TIGR00109">
    <property type="entry name" value="hemH"/>
    <property type="match status" value="1"/>
</dbReference>
<dbReference type="PANTHER" id="PTHR11108">
    <property type="entry name" value="FERROCHELATASE"/>
    <property type="match status" value="1"/>
</dbReference>
<dbReference type="PANTHER" id="PTHR11108:SF1">
    <property type="entry name" value="FERROCHELATASE, MITOCHONDRIAL"/>
    <property type="match status" value="1"/>
</dbReference>
<dbReference type="Pfam" id="PF00762">
    <property type="entry name" value="Ferrochelatase"/>
    <property type="match status" value="1"/>
</dbReference>
<dbReference type="SUPFAM" id="SSF53800">
    <property type="entry name" value="Chelatase"/>
    <property type="match status" value="1"/>
</dbReference>
<dbReference type="PROSITE" id="PS00534">
    <property type="entry name" value="FERROCHELATASE"/>
    <property type="match status" value="1"/>
</dbReference>
<organism>
    <name type="scientific">Serratia proteamaculans (strain 568)</name>
    <dbReference type="NCBI Taxonomy" id="399741"/>
    <lineage>
        <taxon>Bacteria</taxon>
        <taxon>Pseudomonadati</taxon>
        <taxon>Pseudomonadota</taxon>
        <taxon>Gammaproteobacteria</taxon>
        <taxon>Enterobacterales</taxon>
        <taxon>Yersiniaceae</taxon>
        <taxon>Serratia</taxon>
    </lineage>
</organism>
<proteinExistence type="inferred from homology"/>
<gene>
    <name evidence="1" type="primary">hemH</name>
    <name type="ordered locus">Spro_1143</name>
</gene>
<sequence length="320" mass="36040">MKQEKHGVLLVNLGTPDAPTSSAVKRYLKEFLSDDRVVDTAPLIWWPILNGAILPIRSPRVAKLYQSVWMDEGSPLLVYSRRQQRALAARMPNTPVELGMSYGSPSLAEAIDKLLAQGVTNLVVLPLYPQYSCSTSAAVWDGVARILKGYRRLPSVSFIRDYAEHPAYIAALRQSVEHSFAEHGQPDRLVLSFHGIPKRYARLGDDYPQRCEDTLRALTATLPLAPERVMMTYQSRFGREPWLTPYTDETLKGLPAQGVKHIQLICPGFSADCLETLEEIKEQNREIFLKAGGEKFEYISALNDEPAHIDMMQQLVAQRF</sequence>
<protein>
    <recommendedName>
        <fullName evidence="1">Ferrochelatase</fullName>
        <ecNumber evidence="1">4.98.1.1</ecNumber>
    </recommendedName>
    <alternativeName>
        <fullName evidence="1">Heme synthase</fullName>
    </alternativeName>
    <alternativeName>
        <fullName evidence="1">Protoheme ferro-lyase</fullName>
    </alternativeName>
</protein>
<name>HEMH_SERP5</name>
<accession>A8GAV7</accession>